<reference key="1">
    <citation type="journal article" date="1992" name="J. Biol. Chem.">
        <title>Cloning and sequencing of a cDNA encoding 2,3-bisphosphoglycerate-independent phosphoglycerate mutase from maize. Possible relationship to the alkaline phosphatase family.</title>
        <authorList>
            <person name="Grana X."/>
            <person name="de Lecea L."/>
            <person name="El-Maghrabi M.R."/>
            <person name="Urena J.M."/>
            <person name="Caellas C."/>
            <person name="Carreras J."/>
            <person name="Puigdomenech P."/>
            <person name="Pilkis S.J."/>
            <person name="Climent F."/>
        </authorList>
    </citation>
    <scope>NUCLEOTIDE SEQUENCE [MRNA]</scope>
    <scope>PARTIAL PROTEIN SEQUENCE</scope>
</reference>
<reference key="2">
    <citation type="journal article" date="1994" name="Biochem. Biophys. Res. Commun.">
        <title>Isolation and characterization of cofactor-independent phosphoglycerate mutase gene from maize.</title>
        <authorList>
            <person name="Perez de la Ossa P."/>
            <person name="Grana X."/>
            <person name="Ruiz-Lozano P."/>
            <person name="Climent F."/>
        </authorList>
    </citation>
    <scope>NUCLEOTIDE SEQUENCE [GENOMIC DNA]</scope>
    <source>
        <strain>cv. Wisconsin 22</strain>
    </source>
</reference>
<reference key="3">
    <citation type="journal article" date="1996" name="Theor. Appl. Genet.">
        <title>The maize two dimensional gel protein database: towards an integrated genome analysis program.</title>
        <authorList>
            <person name="Touzet P."/>
            <person name="Riccardi F."/>
            <person name="Morin C."/>
            <person name="Damerval C."/>
            <person name="Huet J.-C."/>
            <person name="Pernollet J.-C."/>
            <person name="Zivy M."/>
            <person name="de Vienne D."/>
        </authorList>
        <dbReference type="AGRICOLA" id="IND20551642"/>
    </citation>
    <scope>PROTEIN SEQUENCE OF 223-236</scope>
    <source>
        <tissue>Coleoptile</tissue>
    </source>
</reference>
<sequence length="559" mass="60620">MGSSGFSWTLPDHPKLPKGKSVAVVVLDGWGEANPDQYNCIHVAQTPVMDSLKNGAPEKWRLVKAHGTAVGLPSDDDMGNSEVGHNALGAGRIFAQGAKLVDQALASGKIYDGDGFNYIKESFESGTLHLIGLLSDGGVHSRLDQLQLLLKGVSERGAKKIRVHILTDGRDVLDGSSIGFVETLENDLLELRAKGVDAQIASGGGRMYVTMDRYENDWDVVKRGWDAQVLGEAPYKFKSALEAVKTLRAQPKANDQYLPPFVIVDDSGNAVGPVLDGDAVVTINFRADRMVMLAKALEYADFDNFDRVRVPKIRYAGMLQYDGELKLPSRYLVSPPEIDRTSGEYLVKNGIRTFACSETVKFGHVTFFWNGNRSGYFDATKEEYVEVPSDSGITFNVAPNMKALEIAEKARDALLSGKFDQVRVNLPNGDMVGHTGDIEATVVACKAADEAVKIILDAVEQVGGIYLVTADHGNAEDMVKRNKSGKPLLDKNDRIQILTSHTLQPVPVAIGGPGLHPGVKFRNDIQTPGLANVAATVMNLHGFEAPADYEQTLIEVADN</sequence>
<organism>
    <name type="scientific">Zea mays</name>
    <name type="common">Maize</name>
    <dbReference type="NCBI Taxonomy" id="4577"/>
    <lineage>
        <taxon>Eukaryota</taxon>
        <taxon>Viridiplantae</taxon>
        <taxon>Streptophyta</taxon>
        <taxon>Embryophyta</taxon>
        <taxon>Tracheophyta</taxon>
        <taxon>Spermatophyta</taxon>
        <taxon>Magnoliopsida</taxon>
        <taxon>Liliopsida</taxon>
        <taxon>Poales</taxon>
        <taxon>Poaceae</taxon>
        <taxon>PACMAD clade</taxon>
        <taxon>Panicoideae</taxon>
        <taxon>Andropogonodae</taxon>
        <taxon>Andropogoneae</taxon>
        <taxon>Tripsacinae</taxon>
        <taxon>Zea</taxon>
    </lineage>
</organism>
<accession>P30792</accession>
<comment type="function">
    <text evidence="1">Catalyzes the interconversion of 2-phosphoglycerate and 3-phosphoglycerate.</text>
</comment>
<comment type="catalytic activity">
    <reaction>
        <text>(2R)-2-phosphoglycerate = (2R)-3-phosphoglycerate</text>
        <dbReference type="Rhea" id="RHEA:15901"/>
        <dbReference type="ChEBI" id="CHEBI:58272"/>
        <dbReference type="ChEBI" id="CHEBI:58289"/>
        <dbReference type="EC" id="5.4.2.12"/>
    </reaction>
</comment>
<comment type="cofactor">
    <cofactor evidence="1">
        <name>Mn(2+)</name>
        <dbReference type="ChEBI" id="CHEBI:29035"/>
    </cofactor>
    <text evidence="1">Binds 2 manganese ions per subunit.</text>
</comment>
<comment type="pathway">
    <text>Carbohydrate degradation; glycolysis; pyruvate from D-glyceraldehyde 3-phosphate: step 3/5.</text>
</comment>
<comment type="subunit">
    <text>Monomer.</text>
</comment>
<comment type="subcellular location">
    <subcellularLocation>
        <location>Cytoplasm</location>
    </subcellularLocation>
</comment>
<comment type="tissue specificity">
    <text>Found ubiquitously in germinating seed.</text>
</comment>
<comment type="developmental stage">
    <text>Expression most important during germination, it decreases during development.</text>
</comment>
<comment type="PTM">
    <text>The N-terminus is blocked.</text>
</comment>
<comment type="similarity">
    <text evidence="3">Belongs to the BPG-independent phosphoglycerate mutase family.</text>
</comment>
<keyword id="KW-0963">Cytoplasm</keyword>
<keyword id="KW-0903">Direct protein sequencing</keyword>
<keyword id="KW-0324">Glycolysis</keyword>
<keyword id="KW-0413">Isomerase</keyword>
<keyword id="KW-0464">Manganese</keyword>
<keyword id="KW-0479">Metal-binding</keyword>
<keyword id="KW-1185">Reference proteome</keyword>
<name>PMGI_MAIZE</name>
<feature type="chain" id="PRO_0000212110" description="2,3-bisphosphoglycerate-independent phosphoglycerate mutase">
    <location>
        <begin position="1"/>
        <end position="559"/>
    </location>
</feature>
<feature type="active site" description="Phosphoserine intermediate" evidence="2">
    <location>
        <position position="81"/>
    </location>
</feature>
<feature type="binding site" evidence="2">
    <location>
        <position position="28"/>
    </location>
    <ligand>
        <name>Mn(2+)</name>
        <dbReference type="ChEBI" id="CHEBI:29035"/>
        <label>2</label>
    </ligand>
</feature>
<feature type="binding site" evidence="2">
    <location>
        <position position="81"/>
    </location>
    <ligand>
        <name>Mn(2+)</name>
        <dbReference type="ChEBI" id="CHEBI:29035"/>
        <label>2</label>
    </ligand>
</feature>
<feature type="binding site" evidence="2">
    <location>
        <position position="140"/>
    </location>
    <ligand>
        <name>substrate</name>
    </ligand>
</feature>
<feature type="binding site" evidence="2">
    <location>
        <begin position="170"/>
        <end position="171"/>
    </location>
    <ligand>
        <name>substrate</name>
    </ligand>
</feature>
<feature type="binding site" evidence="2">
    <location>
        <position position="206"/>
    </location>
    <ligand>
        <name>substrate</name>
    </ligand>
</feature>
<feature type="binding site" evidence="2">
    <location>
        <position position="213"/>
    </location>
    <ligand>
        <name>substrate</name>
    </ligand>
</feature>
<feature type="binding site" evidence="2">
    <location>
        <begin position="286"/>
        <end position="289"/>
    </location>
    <ligand>
        <name>substrate</name>
    </ligand>
</feature>
<feature type="binding site" evidence="2">
    <location>
        <position position="361"/>
    </location>
    <ligand>
        <name>substrate</name>
    </ligand>
</feature>
<feature type="binding site" evidence="2">
    <location>
        <position position="430"/>
    </location>
    <ligand>
        <name>Mn(2+)</name>
        <dbReference type="ChEBI" id="CHEBI:29035"/>
        <label>1</label>
    </ligand>
</feature>
<feature type="binding site" evidence="2">
    <location>
        <position position="434"/>
    </location>
    <ligand>
        <name>Mn(2+)</name>
        <dbReference type="ChEBI" id="CHEBI:29035"/>
        <label>1</label>
    </ligand>
</feature>
<feature type="binding site" evidence="2">
    <location>
        <position position="471"/>
    </location>
    <ligand>
        <name>Mn(2+)</name>
        <dbReference type="ChEBI" id="CHEBI:29035"/>
        <label>2</label>
    </ligand>
</feature>
<feature type="binding site" evidence="2">
    <location>
        <position position="472"/>
    </location>
    <ligand>
        <name>Mn(2+)</name>
        <dbReference type="ChEBI" id="CHEBI:29035"/>
        <label>2</label>
    </ligand>
</feature>
<feature type="binding site" evidence="2">
    <location>
        <position position="501"/>
    </location>
    <ligand>
        <name>Mn(2+)</name>
        <dbReference type="ChEBI" id="CHEBI:29035"/>
        <label>1</label>
    </ligand>
</feature>
<feature type="sequence conflict" description="In Ref. 2; CAA83914." evidence="3" ref="2">
    <original>S</original>
    <variation>P</variation>
    <location>
        <position position="21"/>
    </location>
</feature>
<feature type="sequence conflict" description="In Ref. 1; AA sequence." evidence="3" ref="1">
    <original>W</original>
    <variation>R</variation>
    <location>
        <position position="60"/>
    </location>
</feature>
<feature type="sequence conflict" description="In Ref. 1; AA sequence." evidence="3" ref="1">
    <original>D</original>
    <variation>N</variation>
    <location>
        <position position="303"/>
    </location>
</feature>
<feature type="sequence conflict" description="In Ref. 1; AA sequence." evidence="3" ref="1">
    <original>DR</original>
    <variation>GG</variation>
    <location>
        <begin position="493"/>
        <end position="494"/>
    </location>
</feature>
<evidence type="ECO:0000250" key="1"/>
<evidence type="ECO:0000250" key="2">
    <source>
        <dbReference type="UniProtKB" id="Q9X519"/>
    </source>
</evidence>
<evidence type="ECO:0000305" key="3"/>
<dbReference type="EC" id="5.4.2.12"/>
<dbReference type="EMBL" id="M80912">
    <property type="protein sequence ID" value="AAA33499.1"/>
    <property type="molecule type" value="mRNA"/>
</dbReference>
<dbReference type="EMBL" id="Z33611">
    <property type="protein sequence ID" value="CAA83914.1"/>
    <property type="molecule type" value="Genomic_DNA"/>
</dbReference>
<dbReference type="EMBL" id="Z33612">
    <property type="protein sequence ID" value="CAA83914.1"/>
    <property type="status" value="JOINED"/>
    <property type="molecule type" value="Genomic_DNA"/>
</dbReference>
<dbReference type="PIR" id="A42807">
    <property type="entry name" value="A42807"/>
</dbReference>
<dbReference type="RefSeq" id="NP_001105584.1">
    <property type="nucleotide sequence ID" value="NM_001112114.1"/>
</dbReference>
<dbReference type="RefSeq" id="XP_008655440.1">
    <property type="nucleotide sequence ID" value="XM_008657218.1"/>
</dbReference>
<dbReference type="SMR" id="P30792"/>
<dbReference type="FunCoup" id="P30792">
    <property type="interactions" value="1476"/>
</dbReference>
<dbReference type="STRING" id="4577.P30792"/>
<dbReference type="iPTMnet" id="P30792"/>
<dbReference type="PaxDb" id="4577-GRMZM5G833389_P02"/>
<dbReference type="GeneID" id="542578"/>
<dbReference type="KEGG" id="zma:542578"/>
<dbReference type="MaizeGDB" id="30148"/>
<dbReference type="eggNOG" id="KOG4513">
    <property type="taxonomic scope" value="Eukaryota"/>
</dbReference>
<dbReference type="InParanoid" id="P30792"/>
<dbReference type="OrthoDB" id="952271at2759"/>
<dbReference type="BioCyc" id="MetaCyc:MONOMER-9165"/>
<dbReference type="SABIO-RK" id="P30792"/>
<dbReference type="UniPathway" id="UPA00109">
    <property type="reaction ID" value="UER00186"/>
</dbReference>
<dbReference type="Proteomes" id="UP000007305">
    <property type="component" value="Unplaced"/>
</dbReference>
<dbReference type="ExpressionAtlas" id="P30792">
    <property type="expression patterns" value="baseline and differential"/>
</dbReference>
<dbReference type="GO" id="GO:0005737">
    <property type="term" value="C:cytoplasm"/>
    <property type="evidence" value="ECO:0007669"/>
    <property type="project" value="UniProtKB-SubCell"/>
</dbReference>
<dbReference type="GO" id="GO:0030145">
    <property type="term" value="F:manganese ion binding"/>
    <property type="evidence" value="ECO:0000318"/>
    <property type="project" value="GO_Central"/>
</dbReference>
<dbReference type="GO" id="GO:0004619">
    <property type="term" value="F:phosphoglycerate mutase activity"/>
    <property type="evidence" value="ECO:0000318"/>
    <property type="project" value="GO_Central"/>
</dbReference>
<dbReference type="GO" id="GO:0005975">
    <property type="term" value="P:carbohydrate metabolic process"/>
    <property type="evidence" value="ECO:0000318"/>
    <property type="project" value="GO_Central"/>
</dbReference>
<dbReference type="GO" id="GO:0006007">
    <property type="term" value="P:glucose catabolic process"/>
    <property type="evidence" value="ECO:0007669"/>
    <property type="project" value="InterPro"/>
</dbReference>
<dbReference type="GO" id="GO:0006096">
    <property type="term" value="P:glycolytic process"/>
    <property type="evidence" value="ECO:0007669"/>
    <property type="project" value="UniProtKB-UniPathway"/>
</dbReference>
<dbReference type="CDD" id="cd16010">
    <property type="entry name" value="iPGM"/>
    <property type="match status" value="1"/>
</dbReference>
<dbReference type="FunFam" id="3.40.1450.10:FF:000002">
    <property type="entry name" value="2,3-bisphosphoglycerate-independent phosphoglycerate mutase"/>
    <property type="match status" value="1"/>
</dbReference>
<dbReference type="FunFam" id="3.40.720.10:FF:000125">
    <property type="entry name" value="2,3-bisphosphoglycerate-independent phosphoglycerate mutase"/>
    <property type="match status" value="1"/>
</dbReference>
<dbReference type="Gene3D" id="3.40.720.10">
    <property type="entry name" value="Alkaline Phosphatase, subunit A"/>
    <property type="match status" value="1"/>
</dbReference>
<dbReference type="Gene3D" id="3.40.1450.10">
    <property type="entry name" value="BPG-independent phosphoglycerate mutase, domain B"/>
    <property type="match status" value="1"/>
</dbReference>
<dbReference type="InterPro" id="IPR017850">
    <property type="entry name" value="Alkaline_phosphatase_core_sf"/>
</dbReference>
<dbReference type="InterPro" id="IPR011258">
    <property type="entry name" value="BPG-indep_PGM_N"/>
</dbReference>
<dbReference type="InterPro" id="IPR006124">
    <property type="entry name" value="Metalloenzyme"/>
</dbReference>
<dbReference type="InterPro" id="IPR036646">
    <property type="entry name" value="PGAM_B_sf"/>
</dbReference>
<dbReference type="InterPro" id="IPR005995">
    <property type="entry name" value="Pgm_bpd_ind"/>
</dbReference>
<dbReference type="NCBIfam" id="TIGR01307">
    <property type="entry name" value="pgm_bpd_ind"/>
    <property type="match status" value="1"/>
</dbReference>
<dbReference type="PANTHER" id="PTHR31637">
    <property type="entry name" value="2,3-BISPHOSPHOGLYCERATE-INDEPENDENT PHOSPHOGLYCERATE MUTASE"/>
    <property type="match status" value="1"/>
</dbReference>
<dbReference type="PANTHER" id="PTHR31637:SF7">
    <property type="entry name" value="2,3-BISPHOSPHOGLYCERATE-INDEPENDENT PHOSPHOGLYCERATE MUTASE 1"/>
    <property type="match status" value="1"/>
</dbReference>
<dbReference type="Pfam" id="PF06415">
    <property type="entry name" value="iPGM_N"/>
    <property type="match status" value="1"/>
</dbReference>
<dbReference type="Pfam" id="PF01676">
    <property type="entry name" value="Metalloenzyme"/>
    <property type="match status" value="1"/>
</dbReference>
<dbReference type="PIRSF" id="PIRSF001492">
    <property type="entry name" value="IPGAM"/>
    <property type="match status" value="1"/>
</dbReference>
<dbReference type="SUPFAM" id="SSF64158">
    <property type="entry name" value="2,3-Bisphosphoglycerate-independent phosphoglycerate mutase, substrate-binding domain"/>
    <property type="match status" value="1"/>
</dbReference>
<dbReference type="SUPFAM" id="SSF53649">
    <property type="entry name" value="Alkaline phosphatase-like"/>
    <property type="match status" value="1"/>
</dbReference>
<proteinExistence type="evidence at protein level"/>
<protein>
    <recommendedName>
        <fullName>2,3-bisphosphoglycerate-independent phosphoglycerate mutase</fullName>
        <shortName>BPG-independent PGAM</shortName>
        <shortName>Phosphoglyceromutase</shortName>
        <ecNumber>5.4.2.12</ecNumber>
    </recommendedName>
    <alternativeName>
        <fullName>PGAM-I</fullName>
    </alternativeName>
</protein>